<keyword id="KW-0963">Cytoplasm</keyword>
<keyword id="KW-0479">Metal-binding</keyword>
<keyword id="KW-0539">Nucleus</keyword>
<keyword id="KW-1185">Reference proteome</keyword>
<gene>
    <name type="primary">PEL2</name>
    <name type="ordered locus">At3g58390</name>
    <name type="ORF">F9D24.300</name>
</gene>
<accession>Q9M2H7</accession>
<reference key="1">
    <citation type="journal article" date="2000" name="Nature">
        <title>Sequence and analysis of chromosome 3 of the plant Arabidopsis thaliana.</title>
        <authorList>
            <person name="Salanoubat M."/>
            <person name="Lemcke K."/>
            <person name="Rieger M."/>
            <person name="Ansorge W."/>
            <person name="Unseld M."/>
            <person name="Fartmann B."/>
            <person name="Valle G."/>
            <person name="Bloecker H."/>
            <person name="Perez-Alonso M."/>
            <person name="Obermaier B."/>
            <person name="Delseny M."/>
            <person name="Boutry M."/>
            <person name="Grivell L.A."/>
            <person name="Mache R."/>
            <person name="Puigdomenech P."/>
            <person name="De Simone V."/>
            <person name="Choisne N."/>
            <person name="Artiguenave F."/>
            <person name="Robert C."/>
            <person name="Brottier P."/>
            <person name="Wincker P."/>
            <person name="Cattolico L."/>
            <person name="Weissenbach J."/>
            <person name="Saurin W."/>
            <person name="Quetier F."/>
            <person name="Schaefer M."/>
            <person name="Mueller-Auer S."/>
            <person name="Gabel C."/>
            <person name="Fuchs M."/>
            <person name="Benes V."/>
            <person name="Wurmbach E."/>
            <person name="Drzonek H."/>
            <person name="Erfle H."/>
            <person name="Jordan N."/>
            <person name="Bangert S."/>
            <person name="Wiedelmann R."/>
            <person name="Kranz H."/>
            <person name="Voss H."/>
            <person name="Holland R."/>
            <person name="Brandt P."/>
            <person name="Nyakatura G."/>
            <person name="Vezzi A."/>
            <person name="D'Angelo M."/>
            <person name="Pallavicini A."/>
            <person name="Toppo S."/>
            <person name="Simionati B."/>
            <person name="Conrad A."/>
            <person name="Hornischer K."/>
            <person name="Kauer G."/>
            <person name="Loehnert T.-H."/>
            <person name="Nordsiek G."/>
            <person name="Reichelt J."/>
            <person name="Scharfe M."/>
            <person name="Schoen O."/>
            <person name="Bargues M."/>
            <person name="Terol J."/>
            <person name="Climent J."/>
            <person name="Navarro P."/>
            <person name="Collado C."/>
            <person name="Perez-Perez A."/>
            <person name="Ottenwaelder B."/>
            <person name="Duchemin D."/>
            <person name="Cooke R."/>
            <person name="Laudie M."/>
            <person name="Berger-Llauro C."/>
            <person name="Purnelle B."/>
            <person name="Masuy D."/>
            <person name="de Haan M."/>
            <person name="Maarse A.C."/>
            <person name="Alcaraz J.-P."/>
            <person name="Cottet A."/>
            <person name="Casacuberta E."/>
            <person name="Monfort A."/>
            <person name="Argiriou A."/>
            <person name="Flores M."/>
            <person name="Liguori R."/>
            <person name="Vitale D."/>
            <person name="Mannhaupt G."/>
            <person name="Haase D."/>
            <person name="Schoof H."/>
            <person name="Rudd S."/>
            <person name="Zaccaria P."/>
            <person name="Mewes H.-W."/>
            <person name="Mayer K.F.X."/>
            <person name="Kaul S."/>
            <person name="Town C.D."/>
            <person name="Koo H.L."/>
            <person name="Tallon L.J."/>
            <person name="Jenkins J."/>
            <person name="Rooney T."/>
            <person name="Rizzo M."/>
            <person name="Walts A."/>
            <person name="Utterback T."/>
            <person name="Fujii C.Y."/>
            <person name="Shea T.P."/>
            <person name="Creasy T.H."/>
            <person name="Haas B."/>
            <person name="Maiti R."/>
            <person name="Wu D."/>
            <person name="Peterson J."/>
            <person name="Van Aken S."/>
            <person name="Pai G."/>
            <person name="Militscher J."/>
            <person name="Sellers P."/>
            <person name="Gill J.E."/>
            <person name="Feldblyum T.V."/>
            <person name="Preuss D."/>
            <person name="Lin X."/>
            <person name="Nierman W.C."/>
            <person name="Salzberg S.L."/>
            <person name="White O."/>
            <person name="Venter J.C."/>
            <person name="Fraser C.M."/>
            <person name="Kaneko T."/>
            <person name="Nakamura Y."/>
            <person name="Sato S."/>
            <person name="Kato T."/>
            <person name="Asamizu E."/>
            <person name="Sasamoto S."/>
            <person name="Kimura T."/>
            <person name="Idesawa K."/>
            <person name="Kawashima K."/>
            <person name="Kishida Y."/>
            <person name="Kiyokawa C."/>
            <person name="Kohara M."/>
            <person name="Matsumoto M."/>
            <person name="Matsuno A."/>
            <person name="Muraki A."/>
            <person name="Nakayama S."/>
            <person name="Nakazaki N."/>
            <person name="Shinpo S."/>
            <person name="Takeuchi C."/>
            <person name="Wada T."/>
            <person name="Watanabe A."/>
            <person name="Yamada M."/>
            <person name="Yasuda M."/>
            <person name="Tabata S."/>
        </authorList>
    </citation>
    <scope>NUCLEOTIDE SEQUENCE [LARGE SCALE GENOMIC DNA]</scope>
    <source>
        <strain>cv. Columbia</strain>
    </source>
</reference>
<reference key="2">
    <citation type="journal article" date="2017" name="Plant J.">
        <title>Araport11: a complete reannotation of the Arabidopsis thaliana reference genome.</title>
        <authorList>
            <person name="Cheng C.Y."/>
            <person name="Krishnakumar V."/>
            <person name="Chan A.P."/>
            <person name="Thibaud-Nissen F."/>
            <person name="Schobel S."/>
            <person name="Town C.D."/>
        </authorList>
    </citation>
    <scope>GENOME REANNOTATION</scope>
    <source>
        <strain>cv. Columbia</strain>
    </source>
</reference>
<reference key="3">
    <citation type="journal article" date="2000" name="Sex. Plant Reprod.">
        <title>An Arabidopsis homologue of the Drosophila meiotic gene Pelota.</title>
        <authorList>
            <person name="Caryl A.P."/>
            <person name="Lacroix I."/>
            <person name="Jones G.H."/>
            <person name="Franklin F.C.H."/>
        </authorList>
        <dbReference type="AGRICOLA" id="IND22059670"/>
    </citation>
    <scope>GENE FAMILY</scope>
    <source>
        <strain>cv. Columbia</strain>
    </source>
</reference>
<name>PEL2_ARATH</name>
<comment type="function">
    <text evidence="3">Component of the Pelota-HBS1L complex, a complex that recognizes stalled ribosomes and triggers the No-Go Decay (NGD) pathway. In the Pelota-HBS1L complex, pelo recognizes ribosomes stalled at the 3' end of an mRNA and engages stalled ribosomes by destabilizing mRNA in the mRNA channel. Following ribosome-binding, the Pelota-HBS1L complex promotes the disassembly of stalled ribosomes, followed by degradation of damaged mRNAs as part of the NGD pathway.</text>
</comment>
<comment type="cofactor">
    <cofactor evidence="1">
        <name>a divalent metal cation</name>
        <dbReference type="ChEBI" id="CHEBI:60240"/>
    </cofactor>
</comment>
<comment type="subcellular location">
    <subcellularLocation>
        <location evidence="2">Cytoplasm</location>
    </subcellularLocation>
    <subcellularLocation>
        <location evidence="2">Nucleus</location>
    </subcellularLocation>
</comment>
<comment type="similarity">
    <text evidence="4">Belongs to the eukaryotic release factor 1 family. Pelota subfamily.</text>
</comment>
<organism>
    <name type="scientific">Arabidopsis thaliana</name>
    <name type="common">Mouse-ear cress</name>
    <dbReference type="NCBI Taxonomy" id="3702"/>
    <lineage>
        <taxon>Eukaryota</taxon>
        <taxon>Viridiplantae</taxon>
        <taxon>Streptophyta</taxon>
        <taxon>Embryophyta</taxon>
        <taxon>Tracheophyta</taxon>
        <taxon>Spermatophyta</taxon>
        <taxon>Magnoliopsida</taxon>
        <taxon>eudicotyledons</taxon>
        <taxon>Gunneridae</taxon>
        <taxon>Pentapetalae</taxon>
        <taxon>rosids</taxon>
        <taxon>malvids</taxon>
        <taxon>Brassicales</taxon>
        <taxon>Brassicaceae</taxon>
        <taxon>Camelineae</taxon>
        <taxon>Arabidopsis</taxon>
    </lineage>
</organism>
<protein>
    <recommendedName>
        <fullName>Protein PELOTA 2</fullName>
        <shortName>AtPelota2</shortName>
    </recommendedName>
</protein>
<proteinExistence type="inferred from homology"/>
<feature type="chain" id="PRO_0000429931" description="Protein PELOTA 2">
    <location>
        <begin position="1"/>
        <end position="395"/>
    </location>
</feature>
<evidence type="ECO:0000250" key="1">
    <source>
        <dbReference type="UniProtKB" id="P33309"/>
    </source>
</evidence>
<evidence type="ECO:0000250" key="2">
    <source>
        <dbReference type="UniProtKB" id="P48612"/>
    </source>
</evidence>
<evidence type="ECO:0000250" key="3">
    <source>
        <dbReference type="UniProtKB" id="Q9BRX2"/>
    </source>
</evidence>
<evidence type="ECO:0000305" key="4"/>
<sequence>MKIIRKDFVRNGPGSVKMMAEDSDDLWYTYNLIGPEDSVMAITFRKVGGEGRDSTPSLSRIESKYLGKKRSFTRTERVKLKLEVQVEEVDYDKDGDVMRIRGKNIMENEHVRIGAFHTLEIELKRPFLLRKENWDSLALDTLKQASDLAASADLAVVLMQEGLAQIFLAGKSVKSCGARIKTSIPWKHGAGTAGYESVLKKFFENVVQAFLKHVDFSVVRCAVIASPGFTKDQFHRHLLLEAERRQLRPILENKSRFILVHTNSGYKHSLSEVLHDPNVMNMIKDTKAAKEVKALNDFFTMFSNDPNRACYGPKHVEVAHERMAIQTLLIIDGLFRNSDVKTRKKYVDFVESVKDSGGEVFIFSSMHASGEQLAQHTGIAAILRFPLPDLEDIEM</sequence>
<dbReference type="EMBL" id="AL137081">
    <property type="protein sequence ID" value="CAB68177.1"/>
    <property type="molecule type" value="Genomic_DNA"/>
</dbReference>
<dbReference type="EMBL" id="CP002686">
    <property type="protein sequence ID" value="AEE79776.1"/>
    <property type="molecule type" value="Genomic_DNA"/>
</dbReference>
<dbReference type="PIR" id="T45999">
    <property type="entry name" value="T45999"/>
</dbReference>
<dbReference type="RefSeq" id="NP_191398.1">
    <property type="nucleotide sequence ID" value="NM_115701.2"/>
</dbReference>
<dbReference type="SMR" id="Q9M2H7"/>
<dbReference type="FunCoup" id="Q9M2H7">
    <property type="interactions" value="3115"/>
</dbReference>
<dbReference type="STRING" id="3702.Q9M2H7"/>
<dbReference type="GlyGen" id="Q9M2H7">
    <property type="glycosylation" value="1 site"/>
</dbReference>
<dbReference type="iPTMnet" id="Q9M2H7"/>
<dbReference type="PaxDb" id="3702-AT3G58390.1"/>
<dbReference type="ProteomicsDB" id="236680"/>
<dbReference type="EnsemblPlants" id="AT3G58390.1">
    <property type="protein sequence ID" value="AT3G58390.1"/>
    <property type="gene ID" value="AT3G58390"/>
</dbReference>
<dbReference type="GeneID" id="825008"/>
<dbReference type="Gramene" id="AT3G58390.1">
    <property type="protein sequence ID" value="AT3G58390.1"/>
    <property type="gene ID" value="AT3G58390"/>
</dbReference>
<dbReference type="KEGG" id="ath:AT3G58390"/>
<dbReference type="Araport" id="AT3G58390"/>
<dbReference type="TAIR" id="AT3G58390">
    <property type="gene designation" value="PEL2"/>
</dbReference>
<dbReference type="eggNOG" id="KOG2869">
    <property type="taxonomic scope" value="Eukaryota"/>
</dbReference>
<dbReference type="HOGENOM" id="CLU_023334_3_1_1"/>
<dbReference type="InParanoid" id="Q9M2H7"/>
<dbReference type="OMA" id="LALLCCK"/>
<dbReference type="PhylomeDB" id="Q9M2H7"/>
<dbReference type="PRO" id="PR:Q9M2H7"/>
<dbReference type="Proteomes" id="UP000006548">
    <property type="component" value="Chromosome 3"/>
</dbReference>
<dbReference type="ExpressionAtlas" id="Q9M2H7">
    <property type="expression patterns" value="baseline and differential"/>
</dbReference>
<dbReference type="GO" id="GO:0005737">
    <property type="term" value="C:cytoplasm"/>
    <property type="evidence" value="ECO:0007669"/>
    <property type="project" value="UniProtKB-SubCell"/>
</dbReference>
<dbReference type="GO" id="GO:0005634">
    <property type="term" value="C:nucleus"/>
    <property type="evidence" value="ECO:0007669"/>
    <property type="project" value="UniProtKB-SubCell"/>
</dbReference>
<dbReference type="GO" id="GO:0046872">
    <property type="term" value="F:metal ion binding"/>
    <property type="evidence" value="ECO:0007669"/>
    <property type="project" value="UniProtKB-KW"/>
</dbReference>
<dbReference type="GO" id="GO:0070966">
    <property type="term" value="P:nuclear-transcribed mRNA catabolic process, no-go decay"/>
    <property type="evidence" value="ECO:0000270"/>
    <property type="project" value="TAIR"/>
</dbReference>
<dbReference type="GO" id="GO:0070481">
    <property type="term" value="P:nuclear-transcribed mRNA catabolic process, non-stop decay"/>
    <property type="evidence" value="ECO:0000270"/>
    <property type="project" value="TAIR"/>
</dbReference>
<dbReference type="GO" id="GO:0071025">
    <property type="term" value="P:RNA surveillance"/>
    <property type="evidence" value="ECO:0007669"/>
    <property type="project" value="InterPro"/>
</dbReference>
<dbReference type="FunFam" id="2.30.30.870:FF:000002">
    <property type="entry name" value="Protein pelota homolog"/>
    <property type="match status" value="1"/>
</dbReference>
<dbReference type="FunFam" id="3.30.1330.30:FF:000008">
    <property type="entry name" value="Protein pelota homolog"/>
    <property type="match status" value="1"/>
</dbReference>
<dbReference type="FunFam" id="3.30.420.60:FF:000002">
    <property type="entry name" value="Protein pelota homolog"/>
    <property type="match status" value="1"/>
</dbReference>
<dbReference type="Gene3D" id="3.30.1330.30">
    <property type="match status" value="1"/>
</dbReference>
<dbReference type="Gene3D" id="3.30.420.60">
    <property type="entry name" value="eRF1 domain 2"/>
    <property type="match status" value="1"/>
</dbReference>
<dbReference type="Gene3D" id="2.30.30.870">
    <property type="entry name" value="Pelota, domain A"/>
    <property type="match status" value="1"/>
</dbReference>
<dbReference type="InterPro" id="IPR042226">
    <property type="entry name" value="eFR1_2_sf"/>
</dbReference>
<dbReference type="InterPro" id="IPR005140">
    <property type="entry name" value="eRF1_1_Pelota"/>
</dbReference>
<dbReference type="InterPro" id="IPR005141">
    <property type="entry name" value="eRF1_2"/>
</dbReference>
<dbReference type="InterPro" id="IPR005142">
    <property type="entry name" value="eRF1_3"/>
</dbReference>
<dbReference type="InterPro" id="IPR038069">
    <property type="entry name" value="Pelota/DOM34_N"/>
</dbReference>
<dbReference type="InterPro" id="IPR029064">
    <property type="entry name" value="Ribosomal_eL30-like_sf"/>
</dbReference>
<dbReference type="InterPro" id="IPR004405">
    <property type="entry name" value="Transl-rel_pelota"/>
</dbReference>
<dbReference type="NCBIfam" id="TIGR00111">
    <property type="entry name" value="pelota"/>
    <property type="match status" value="1"/>
</dbReference>
<dbReference type="PANTHER" id="PTHR10853">
    <property type="entry name" value="PELOTA"/>
    <property type="match status" value="1"/>
</dbReference>
<dbReference type="PANTHER" id="PTHR10853:SF0">
    <property type="entry name" value="PROTEIN PELOTA HOMOLOG"/>
    <property type="match status" value="1"/>
</dbReference>
<dbReference type="Pfam" id="PF03463">
    <property type="entry name" value="eRF1_1"/>
    <property type="match status" value="1"/>
</dbReference>
<dbReference type="Pfam" id="PF03464">
    <property type="entry name" value="eRF1_2"/>
    <property type="match status" value="1"/>
</dbReference>
<dbReference type="Pfam" id="PF03465">
    <property type="entry name" value="eRF1_3"/>
    <property type="match status" value="1"/>
</dbReference>
<dbReference type="SMART" id="SM01194">
    <property type="entry name" value="eRF1_1"/>
    <property type="match status" value="1"/>
</dbReference>
<dbReference type="SUPFAM" id="SSF159065">
    <property type="entry name" value="Dom34/Pelota N-terminal domain-like"/>
    <property type="match status" value="1"/>
</dbReference>
<dbReference type="SUPFAM" id="SSF55315">
    <property type="entry name" value="L30e-like"/>
    <property type="match status" value="1"/>
</dbReference>
<dbReference type="SUPFAM" id="SSF53137">
    <property type="entry name" value="Translational machinery components"/>
    <property type="match status" value="1"/>
</dbReference>